<dbReference type="EMBL" id="M76985">
    <property type="protein sequence ID" value="AAA48808.1"/>
    <property type="status" value="ALT_FRAME"/>
    <property type="molecule type" value="mRNA"/>
</dbReference>
<dbReference type="EMBL" id="X61922">
    <property type="protein sequence ID" value="CAA43924.1"/>
    <property type="molecule type" value="mRNA"/>
</dbReference>
<dbReference type="PIR" id="A43904">
    <property type="entry name" value="A43904"/>
</dbReference>
<dbReference type="SMR" id="P28361"/>
<dbReference type="FunCoup" id="P28361">
    <property type="interactions" value="200"/>
</dbReference>
<dbReference type="VEuPathDB" id="HostDB:geneid_396484"/>
<dbReference type="InParanoid" id="P28361"/>
<dbReference type="OrthoDB" id="6159439at2759"/>
<dbReference type="PhylomeDB" id="P28361"/>
<dbReference type="Proteomes" id="UP000000539">
    <property type="component" value="Unassembled WGS sequence"/>
</dbReference>
<dbReference type="GO" id="GO:0005654">
    <property type="term" value="C:nucleoplasm"/>
    <property type="evidence" value="ECO:0000304"/>
    <property type="project" value="Reactome"/>
</dbReference>
<dbReference type="GO" id="GO:0005634">
    <property type="term" value="C:nucleus"/>
    <property type="evidence" value="ECO:0000318"/>
    <property type="project" value="GO_Central"/>
</dbReference>
<dbReference type="GO" id="GO:0000981">
    <property type="term" value="F:DNA-binding transcription factor activity, RNA polymerase II-specific"/>
    <property type="evidence" value="ECO:0000318"/>
    <property type="project" value="GO_Central"/>
</dbReference>
<dbReference type="GO" id="GO:0000977">
    <property type="term" value="F:RNA polymerase II transcription regulatory region sequence-specific DNA binding"/>
    <property type="evidence" value="ECO:0000318"/>
    <property type="project" value="GO_Central"/>
</dbReference>
<dbReference type="GO" id="GO:0030509">
    <property type="term" value="P:BMP signaling pathway"/>
    <property type="evidence" value="ECO:0000314"/>
    <property type="project" value="MGI"/>
</dbReference>
<dbReference type="GO" id="GO:0048598">
    <property type="term" value="P:embryonic morphogenesis"/>
    <property type="evidence" value="ECO:0000318"/>
    <property type="project" value="GO_Central"/>
</dbReference>
<dbReference type="GO" id="GO:0001503">
    <property type="term" value="P:ossification"/>
    <property type="evidence" value="ECO:0000304"/>
    <property type="project" value="AgBase"/>
</dbReference>
<dbReference type="GO" id="GO:0006357">
    <property type="term" value="P:regulation of transcription by RNA polymerase II"/>
    <property type="evidence" value="ECO:0000318"/>
    <property type="project" value="GO_Central"/>
</dbReference>
<dbReference type="CDD" id="cd00086">
    <property type="entry name" value="homeodomain"/>
    <property type="match status" value="1"/>
</dbReference>
<dbReference type="FunFam" id="1.10.10.60:FF:000134">
    <property type="entry name" value="Homeobox protein MSX-1"/>
    <property type="match status" value="1"/>
</dbReference>
<dbReference type="Gene3D" id="1.10.10.60">
    <property type="entry name" value="Homeodomain-like"/>
    <property type="match status" value="1"/>
</dbReference>
<dbReference type="InterPro" id="IPR001356">
    <property type="entry name" value="HD"/>
</dbReference>
<dbReference type="InterPro" id="IPR020479">
    <property type="entry name" value="HD_metazoa"/>
</dbReference>
<dbReference type="InterPro" id="IPR017970">
    <property type="entry name" value="Homeobox_CS"/>
</dbReference>
<dbReference type="InterPro" id="IPR009057">
    <property type="entry name" value="Homeodomain-like_sf"/>
</dbReference>
<dbReference type="InterPro" id="IPR050674">
    <property type="entry name" value="Msh_Homeobox_Regulators"/>
</dbReference>
<dbReference type="PANTHER" id="PTHR24338">
    <property type="entry name" value="HOMEOBOX PROTEIN MSX"/>
    <property type="match status" value="1"/>
</dbReference>
<dbReference type="PANTHER" id="PTHR24338:SF8">
    <property type="entry name" value="HOMEOBOX PROTEIN MSX-1"/>
    <property type="match status" value="1"/>
</dbReference>
<dbReference type="Pfam" id="PF00046">
    <property type="entry name" value="Homeodomain"/>
    <property type="match status" value="1"/>
</dbReference>
<dbReference type="PRINTS" id="PR00024">
    <property type="entry name" value="HOMEOBOX"/>
</dbReference>
<dbReference type="SMART" id="SM00389">
    <property type="entry name" value="HOX"/>
    <property type="match status" value="1"/>
</dbReference>
<dbReference type="SUPFAM" id="SSF46689">
    <property type="entry name" value="Homeodomain-like"/>
    <property type="match status" value="1"/>
</dbReference>
<dbReference type="PROSITE" id="PS00027">
    <property type="entry name" value="HOMEOBOX_1"/>
    <property type="match status" value="1"/>
</dbReference>
<dbReference type="PROSITE" id="PS50071">
    <property type="entry name" value="HOMEOBOX_2"/>
    <property type="match status" value="1"/>
</dbReference>
<organism>
    <name type="scientific">Gallus gallus</name>
    <name type="common">Chicken</name>
    <dbReference type="NCBI Taxonomy" id="9031"/>
    <lineage>
        <taxon>Eukaryota</taxon>
        <taxon>Metazoa</taxon>
        <taxon>Chordata</taxon>
        <taxon>Craniata</taxon>
        <taxon>Vertebrata</taxon>
        <taxon>Euteleostomi</taxon>
        <taxon>Archelosauria</taxon>
        <taxon>Archosauria</taxon>
        <taxon>Dinosauria</taxon>
        <taxon>Saurischia</taxon>
        <taxon>Theropoda</taxon>
        <taxon>Coelurosauria</taxon>
        <taxon>Aves</taxon>
        <taxon>Neognathae</taxon>
        <taxon>Galloanserae</taxon>
        <taxon>Galliformes</taxon>
        <taxon>Phasianidae</taxon>
        <taxon>Phasianinae</taxon>
        <taxon>Gallus</taxon>
    </lineage>
</organism>
<protein>
    <recommendedName>
        <fullName evidence="8">Homeobox protein MSX-1</fullName>
    </recommendedName>
    <alternativeName>
        <fullName>Homeobox protein Hox-7</fullName>
        <shortName>CHOX-7</shortName>
    </alternativeName>
    <alternativeName>
        <fullName>Msh homeobox 1-like protein</fullName>
    </alternativeName>
</protein>
<name>MSX1_CHICK</name>
<keyword id="KW-0217">Developmental protein</keyword>
<keyword id="KW-0238">DNA-binding</keyword>
<keyword id="KW-0371">Homeobox</keyword>
<keyword id="KW-0539">Nucleus</keyword>
<keyword id="KW-1185">Reference proteome</keyword>
<feature type="chain" id="PRO_0000049097" description="Homeobox protein MSX-1">
    <location>
        <begin position="1"/>
        <end position="249"/>
    </location>
</feature>
<feature type="DNA-binding region" description="Homeobox" evidence="2">
    <location>
        <begin position="122"/>
        <end position="181"/>
    </location>
</feature>
<feature type="region of interest" description="Disordered" evidence="3">
    <location>
        <begin position="1"/>
        <end position="125"/>
    </location>
</feature>
<feature type="compositionally biased region" description="Low complexity" evidence="3">
    <location>
        <begin position="71"/>
        <end position="83"/>
    </location>
</feature>
<feature type="compositionally biased region" description="Basic residues" evidence="3">
    <location>
        <begin position="116"/>
        <end position="125"/>
    </location>
</feature>
<feature type="sequence conflict" description="In Ref. 2; CAA43924." evidence="8" ref="2">
    <original>AE</original>
    <variation>LS</variation>
    <location>
        <begin position="109"/>
        <end position="110"/>
    </location>
</feature>
<sequence length="249" mass="27547">MGGEEESDKPKVSPSPLPFRRWKGSWPTAERGRQRRSRGFRAPSRRPSQPRRSDDGGTDVAAPSRRPLPVRRGAGQAARGRAAQSREPREAGATPWMQSPRFSPPPPRAEPPACTLRKHKTNRKPRTPFTTAQLLALERKFRQKQYLSIAERAEFSSSLSLTETQVKIWFQNRRAKAKRLQEAELEKLKMAAKPMLPPAAFGISFPLGGPAVAGASLYGASSPFQRAGLPVAPVGLYTAHVGYSMYHLT</sequence>
<accession>P28361</accession>
<gene>
    <name evidence="1" type="primary">MSX1</name>
    <name evidence="6 7" type="synonym">HOX7</name>
</gene>
<comment type="function">
    <text evidence="1 4">Probable morphogenetic role (PubMed:1682191). Acts as a transcriptional repressor (By similarity).</text>
</comment>
<comment type="subcellular location">
    <subcellularLocation>
        <location evidence="1">Nucleus</location>
    </subcellularLocation>
</comment>
<comment type="developmental stage">
    <text evidence="5">Expressed in the developing limb bud, and in the lateral mesoderm, ventral to the developing limb bud (PubMed:1684333). Expressed in the entire limb mesoderm at stage 16 in the wing bud and stage 17 for the leg bud (PubMed:1684333). Expression is restricted to the mesoderm under the apical ridge at stage 20 (PubMed:1684333).</text>
</comment>
<comment type="similarity">
    <text evidence="8">Belongs to the Msh homeobox family.</text>
</comment>
<comment type="sequence caution" evidence="8">
    <conflict type="frameshift">
        <sequence resource="EMBL-CDS" id="AAA48808"/>
    </conflict>
</comment>
<proteinExistence type="evidence at transcript level"/>
<evidence type="ECO:0000250" key="1">
    <source>
        <dbReference type="UniProtKB" id="P13297"/>
    </source>
</evidence>
<evidence type="ECO:0000255" key="2">
    <source>
        <dbReference type="PROSITE-ProRule" id="PRU00108"/>
    </source>
</evidence>
<evidence type="ECO:0000256" key="3">
    <source>
        <dbReference type="SAM" id="MobiDB-lite"/>
    </source>
</evidence>
<evidence type="ECO:0000269" key="4">
    <source>
    </source>
</evidence>
<evidence type="ECO:0000269" key="5">
    <source>
    </source>
</evidence>
<evidence type="ECO:0000303" key="6">
    <source>
    </source>
</evidence>
<evidence type="ECO:0000303" key="7">
    <source>
    </source>
</evidence>
<evidence type="ECO:0000305" key="8"/>
<reference key="1">
    <citation type="journal article" date="1991" name="Dev. Biol.">
        <title>Repeating developmental expression of G-Hox 7, a novel homeobox-containing gene in the chicken.</title>
        <authorList>
            <person name="Suzuki H."/>
            <person name="Padanilam B.J."/>
            <person name="Vitale E."/>
            <person name="Ramirez F."/>
            <person name="Solursh M."/>
        </authorList>
    </citation>
    <scope>NUCLEOTIDE SEQUENCE [MRNA]</scope>
</reference>
<reference key="2">
    <citation type="journal article" date="1991" name="Genes Dev.">
        <title>The apical ectodermal ridge regulates Hox-7 and Hox-8 gene expression in developing chick limb buds.</title>
        <authorList>
            <person name="Robert B."/>
            <person name="Lyons G."/>
            <person name="Simandl B.K."/>
            <person name="Kuroiwa A."/>
            <person name="Buckingham M."/>
        </authorList>
    </citation>
    <scope>NUCLEOTIDE SEQUENCE [MRNA] OF 108-249</scope>
    <scope>FUNCTION</scope>
    <scope>DEVELOPMENTAL STAGE</scope>
</reference>